<accession>B7N1L9</accession>
<dbReference type="EC" id="5.3.1.5" evidence="1"/>
<dbReference type="EMBL" id="CU928162">
    <property type="protein sequence ID" value="CAR10239.1"/>
    <property type="molecule type" value="Genomic_DNA"/>
</dbReference>
<dbReference type="RefSeq" id="WP_001149592.1">
    <property type="nucleotide sequence ID" value="NC_011745.1"/>
</dbReference>
<dbReference type="SMR" id="B7N1L9"/>
<dbReference type="GeneID" id="75173765"/>
<dbReference type="KEGG" id="ecq:ECED1_4250"/>
<dbReference type="HOGENOM" id="CLU_037261_1_0_6"/>
<dbReference type="Proteomes" id="UP000000748">
    <property type="component" value="Chromosome"/>
</dbReference>
<dbReference type="GO" id="GO:0005737">
    <property type="term" value="C:cytoplasm"/>
    <property type="evidence" value="ECO:0007669"/>
    <property type="project" value="UniProtKB-SubCell"/>
</dbReference>
<dbReference type="GO" id="GO:0000287">
    <property type="term" value="F:magnesium ion binding"/>
    <property type="evidence" value="ECO:0007669"/>
    <property type="project" value="UniProtKB-UniRule"/>
</dbReference>
<dbReference type="GO" id="GO:0009045">
    <property type="term" value="F:xylose isomerase activity"/>
    <property type="evidence" value="ECO:0007669"/>
    <property type="project" value="UniProtKB-UniRule"/>
</dbReference>
<dbReference type="GO" id="GO:0042732">
    <property type="term" value="P:D-xylose metabolic process"/>
    <property type="evidence" value="ECO:0007669"/>
    <property type="project" value="UniProtKB-UniRule"/>
</dbReference>
<dbReference type="FunFam" id="3.20.20.150:FF:000002">
    <property type="entry name" value="Xylose isomerase"/>
    <property type="match status" value="1"/>
</dbReference>
<dbReference type="Gene3D" id="3.20.20.150">
    <property type="entry name" value="Divalent-metal-dependent TIM barrel enzymes"/>
    <property type="match status" value="1"/>
</dbReference>
<dbReference type="HAMAP" id="MF_00455">
    <property type="entry name" value="Xylose_isom_A"/>
    <property type="match status" value="1"/>
</dbReference>
<dbReference type="InterPro" id="IPR036237">
    <property type="entry name" value="Xyl_isomerase-like_sf"/>
</dbReference>
<dbReference type="InterPro" id="IPR013452">
    <property type="entry name" value="Xylose_isom_bac"/>
</dbReference>
<dbReference type="InterPro" id="IPR001998">
    <property type="entry name" value="Xylose_isomerase"/>
</dbReference>
<dbReference type="NCBIfam" id="NF003998">
    <property type="entry name" value="PRK05474.1"/>
    <property type="match status" value="1"/>
</dbReference>
<dbReference type="NCBIfam" id="TIGR02630">
    <property type="entry name" value="xylose_isom_A"/>
    <property type="match status" value="1"/>
</dbReference>
<dbReference type="PANTHER" id="PTHR48408">
    <property type="match status" value="1"/>
</dbReference>
<dbReference type="PANTHER" id="PTHR48408:SF1">
    <property type="entry name" value="XYLOSE ISOMERASE"/>
    <property type="match status" value="1"/>
</dbReference>
<dbReference type="PRINTS" id="PR00688">
    <property type="entry name" value="XYLOSISMRASE"/>
</dbReference>
<dbReference type="SUPFAM" id="SSF51658">
    <property type="entry name" value="Xylose isomerase-like"/>
    <property type="match status" value="1"/>
</dbReference>
<dbReference type="PROSITE" id="PS51415">
    <property type="entry name" value="XYLOSE_ISOMERASE"/>
    <property type="match status" value="1"/>
</dbReference>
<comment type="catalytic activity">
    <reaction evidence="1">
        <text>alpha-D-xylose = alpha-D-xylulofuranose</text>
        <dbReference type="Rhea" id="RHEA:22816"/>
        <dbReference type="ChEBI" id="CHEBI:28518"/>
        <dbReference type="ChEBI" id="CHEBI:188998"/>
        <dbReference type="EC" id="5.3.1.5"/>
    </reaction>
</comment>
<comment type="cofactor">
    <cofactor evidence="1">
        <name>Mg(2+)</name>
        <dbReference type="ChEBI" id="CHEBI:18420"/>
    </cofactor>
    <text evidence="1">Binds 2 magnesium ions per subunit.</text>
</comment>
<comment type="subunit">
    <text evidence="1">Homotetramer.</text>
</comment>
<comment type="subcellular location">
    <subcellularLocation>
        <location evidence="1">Cytoplasm</location>
    </subcellularLocation>
</comment>
<comment type="similarity">
    <text evidence="1">Belongs to the xylose isomerase family.</text>
</comment>
<sequence length="440" mass="49719">MQAYFDQLDRVRYEGSKSSNPLAFRHYNPDELVLGKRMEEHLRFAACYWHTFCWNGADMFGVGAFNRPWQQPGEALALAKRKADVAFEFFHKLHVPFYCFHDVDVSPEGASLKEYINNFAQMVDVLAGKQEESGVKLLWGTANCFTNPRYGAGAATNPDPEVFSWAATQVVTAMEATHKLGGENYVLWGGREGYETLLNTDLRQEREQLGRFMQMVVEHKHKIGFQGTLLIEPKPQEPTKHQYDYDAATVYGFLKQFGLEKEIKLNIEANHATLAGHSFHHEIATAIALGLFGSVDANRGDAQLGWDTDQFPNSVEENALVMYEILKAGGFTTGGLNFDAKVRRQSTDKYDLFYGHIGAMDTMALALKIAARMIEDGELDKRIAQRYSGWNSELGQQILKGQMSLADLAKYAQEHNLSPVHQSGRQEQLENLVNHYLFDK</sequence>
<name>XYLA_ECO81</name>
<protein>
    <recommendedName>
        <fullName evidence="1">Xylose isomerase</fullName>
        <ecNumber evidence="1">5.3.1.5</ecNumber>
    </recommendedName>
</protein>
<gene>
    <name evidence="1" type="primary">xylA</name>
    <name type="ordered locus">ECED1_4250</name>
</gene>
<organism>
    <name type="scientific">Escherichia coli O81 (strain ED1a)</name>
    <dbReference type="NCBI Taxonomy" id="585397"/>
    <lineage>
        <taxon>Bacteria</taxon>
        <taxon>Pseudomonadati</taxon>
        <taxon>Pseudomonadota</taxon>
        <taxon>Gammaproteobacteria</taxon>
        <taxon>Enterobacterales</taxon>
        <taxon>Enterobacteriaceae</taxon>
        <taxon>Escherichia</taxon>
    </lineage>
</organism>
<reference key="1">
    <citation type="journal article" date="2009" name="PLoS Genet.">
        <title>Organised genome dynamics in the Escherichia coli species results in highly diverse adaptive paths.</title>
        <authorList>
            <person name="Touchon M."/>
            <person name="Hoede C."/>
            <person name="Tenaillon O."/>
            <person name="Barbe V."/>
            <person name="Baeriswyl S."/>
            <person name="Bidet P."/>
            <person name="Bingen E."/>
            <person name="Bonacorsi S."/>
            <person name="Bouchier C."/>
            <person name="Bouvet O."/>
            <person name="Calteau A."/>
            <person name="Chiapello H."/>
            <person name="Clermont O."/>
            <person name="Cruveiller S."/>
            <person name="Danchin A."/>
            <person name="Diard M."/>
            <person name="Dossat C."/>
            <person name="Karoui M.E."/>
            <person name="Frapy E."/>
            <person name="Garry L."/>
            <person name="Ghigo J.M."/>
            <person name="Gilles A.M."/>
            <person name="Johnson J."/>
            <person name="Le Bouguenec C."/>
            <person name="Lescat M."/>
            <person name="Mangenot S."/>
            <person name="Martinez-Jehanne V."/>
            <person name="Matic I."/>
            <person name="Nassif X."/>
            <person name="Oztas S."/>
            <person name="Petit M.A."/>
            <person name="Pichon C."/>
            <person name="Rouy Z."/>
            <person name="Ruf C.S."/>
            <person name="Schneider D."/>
            <person name="Tourret J."/>
            <person name="Vacherie B."/>
            <person name="Vallenet D."/>
            <person name="Medigue C."/>
            <person name="Rocha E.P.C."/>
            <person name="Denamur E."/>
        </authorList>
    </citation>
    <scope>NUCLEOTIDE SEQUENCE [LARGE SCALE GENOMIC DNA]</scope>
    <source>
        <strain>ED1a</strain>
    </source>
</reference>
<keyword id="KW-0119">Carbohydrate metabolism</keyword>
<keyword id="KW-0963">Cytoplasm</keyword>
<keyword id="KW-0413">Isomerase</keyword>
<keyword id="KW-0460">Magnesium</keyword>
<keyword id="KW-0479">Metal-binding</keyword>
<keyword id="KW-0859">Xylose metabolism</keyword>
<feature type="chain" id="PRO_1000200297" description="Xylose isomerase">
    <location>
        <begin position="1"/>
        <end position="440"/>
    </location>
</feature>
<feature type="binding site" evidence="1">
    <location>
        <position position="307"/>
    </location>
    <ligand>
        <name>Mg(2+)</name>
        <dbReference type="ChEBI" id="CHEBI:18420"/>
        <label>2</label>
    </ligand>
</feature>
<feature type="binding site" evidence="1">
    <location>
        <position position="309"/>
    </location>
    <ligand>
        <name>Mg(2+)</name>
        <dbReference type="ChEBI" id="CHEBI:18420"/>
        <label>2</label>
    </ligand>
</feature>
<proteinExistence type="inferred from homology"/>
<evidence type="ECO:0000255" key="1">
    <source>
        <dbReference type="HAMAP-Rule" id="MF_00455"/>
    </source>
</evidence>